<organism>
    <name type="scientific">Burkholderia orbicola (strain MC0-3)</name>
    <dbReference type="NCBI Taxonomy" id="406425"/>
    <lineage>
        <taxon>Bacteria</taxon>
        <taxon>Pseudomonadati</taxon>
        <taxon>Pseudomonadota</taxon>
        <taxon>Betaproteobacteria</taxon>
        <taxon>Burkholderiales</taxon>
        <taxon>Burkholderiaceae</taxon>
        <taxon>Burkholderia</taxon>
        <taxon>Burkholderia cepacia complex</taxon>
        <taxon>Burkholderia orbicola</taxon>
    </lineage>
</organism>
<feature type="chain" id="PRO_1000096044" description="Bifunctional purine biosynthesis protein PurH">
    <location>
        <begin position="1"/>
        <end position="521"/>
    </location>
</feature>
<feature type="domain" description="MGS-like" evidence="2">
    <location>
        <begin position="1"/>
        <end position="145"/>
    </location>
</feature>
<protein>
    <recommendedName>
        <fullName evidence="1">Bifunctional purine biosynthesis protein PurH</fullName>
    </recommendedName>
    <domain>
        <recommendedName>
            <fullName evidence="1">Phosphoribosylaminoimidazolecarboxamide formyltransferase</fullName>
            <ecNumber evidence="1">2.1.2.3</ecNumber>
        </recommendedName>
        <alternativeName>
            <fullName evidence="1">AICAR transformylase</fullName>
        </alternativeName>
    </domain>
    <domain>
        <recommendedName>
            <fullName evidence="1">IMP cyclohydrolase</fullName>
            <ecNumber evidence="1">3.5.4.10</ecNumber>
        </recommendedName>
        <alternativeName>
            <fullName evidence="1">ATIC</fullName>
        </alternativeName>
        <alternativeName>
            <fullName evidence="1">IMP synthase</fullName>
        </alternativeName>
        <alternativeName>
            <fullName evidence="1">Inosinicase</fullName>
        </alternativeName>
    </domain>
</protein>
<name>PUR9_BURO0</name>
<evidence type="ECO:0000255" key="1">
    <source>
        <dbReference type="HAMAP-Rule" id="MF_00139"/>
    </source>
</evidence>
<evidence type="ECO:0000255" key="2">
    <source>
        <dbReference type="PROSITE-ProRule" id="PRU01202"/>
    </source>
</evidence>
<keyword id="KW-0378">Hydrolase</keyword>
<keyword id="KW-0511">Multifunctional enzyme</keyword>
<keyword id="KW-0658">Purine biosynthesis</keyword>
<keyword id="KW-0808">Transferase</keyword>
<proteinExistence type="inferred from homology"/>
<comment type="catalytic activity">
    <reaction evidence="1">
        <text>(6R)-10-formyltetrahydrofolate + 5-amino-1-(5-phospho-beta-D-ribosyl)imidazole-4-carboxamide = 5-formamido-1-(5-phospho-D-ribosyl)imidazole-4-carboxamide + (6S)-5,6,7,8-tetrahydrofolate</text>
        <dbReference type="Rhea" id="RHEA:22192"/>
        <dbReference type="ChEBI" id="CHEBI:57453"/>
        <dbReference type="ChEBI" id="CHEBI:58467"/>
        <dbReference type="ChEBI" id="CHEBI:58475"/>
        <dbReference type="ChEBI" id="CHEBI:195366"/>
        <dbReference type="EC" id="2.1.2.3"/>
    </reaction>
</comment>
<comment type="catalytic activity">
    <reaction evidence="1">
        <text>IMP + H2O = 5-formamido-1-(5-phospho-D-ribosyl)imidazole-4-carboxamide</text>
        <dbReference type="Rhea" id="RHEA:18445"/>
        <dbReference type="ChEBI" id="CHEBI:15377"/>
        <dbReference type="ChEBI" id="CHEBI:58053"/>
        <dbReference type="ChEBI" id="CHEBI:58467"/>
        <dbReference type="EC" id="3.5.4.10"/>
    </reaction>
</comment>
<comment type="pathway">
    <text evidence="1">Purine metabolism; IMP biosynthesis via de novo pathway; 5-formamido-1-(5-phospho-D-ribosyl)imidazole-4-carboxamide from 5-amino-1-(5-phospho-D-ribosyl)imidazole-4-carboxamide (10-formyl THF route): step 1/1.</text>
</comment>
<comment type="pathway">
    <text evidence="1">Purine metabolism; IMP biosynthesis via de novo pathway; IMP from 5-formamido-1-(5-phospho-D-ribosyl)imidazole-4-carboxamide: step 1/1.</text>
</comment>
<comment type="domain">
    <text evidence="1">The IMP cyclohydrolase activity resides in the N-terminal region.</text>
</comment>
<comment type="similarity">
    <text evidence="1">Belongs to the PurH family.</text>
</comment>
<gene>
    <name evidence="1" type="primary">purH</name>
    <name type="ordered locus">Bcenmc03_0658</name>
</gene>
<sequence>MIKQALISVSDKTGIVDFAKSLSDLGVKLLSTGGTAKLLADAGLPVTEVADYTGFPEMLDGRVKTLHPKVHGGILARRDLPEHMQALEQHGIPTIDLLVVNLYPFVATIAKDDCTLADAIENIDIGGPTMLRSAAKNHRDVTVVVDPADYAVVLDEMKANGNTVGYPTNFRLATKVFAHTAQYDGAITNYLTSLTDELQHASRSTYPATLNLAFDKVQDLRYGENPHQSAAFYRDLATPAGALANYRQLQGKELSYNNIADSDAAWECVKTFDAPACVIIKHANPCGVAVGNDSADAYAKAFQTDPTSAFGGIIAFNREVDEAAAQAVAKQFVEVLIAPSFSDAAKQVFAAKQNVRLLEIALGDGHNAFDLKRVGGGLLVQSLDSRNVQPSELRVVTKRQPTAKEMDDLLFAWRVAKYVKSNAIVFCGNGMTLGVGAGQMSRVDSARIASIKAQNAGLTLAGSAVASDAFFPFRDGLDVVVAAGATCVIQPGGSMRDDEVIAAADEHGIAMVLTGVRHFRH</sequence>
<reference key="1">
    <citation type="submission" date="2008-02" db="EMBL/GenBank/DDBJ databases">
        <title>Complete sequence of chromosome 1 of Burkholderia cenocepacia MC0-3.</title>
        <authorList>
            <person name="Copeland A."/>
            <person name="Lucas S."/>
            <person name="Lapidus A."/>
            <person name="Barry K."/>
            <person name="Bruce D."/>
            <person name="Goodwin L."/>
            <person name="Glavina del Rio T."/>
            <person name="Dalin E."/>
            <person name="Tice H."/>
            <person name="Pitluck S."/>
            <person name="Chain P."/>
            <person name="Malfatti S."/>
            <person name="Shin M."/>
            <person name="Vergez L."/>
            <person name="Schmutz J."/>
            <person name="Larimer F."/>
            <person name="Land M."/>
            <person name="Hauser L."/>
            <person name="Kyrpides N."/>
            <person name="Mikhailova N."/>
            <person name="Tiedje J."/>
            <person name="Richardson P."/>
        </authorList>
    </citation>
    <scope>NUCLEOTIDE SEQUENCE [LARGE SCALE GENOMIC DNA]</scope>
    <source>
        <strain>MC0-3</strain>
    </source>
</reference>
<dbReference type="EC" id="2.1.2.3" evidence="1"/>
<dbReference type="EC" id="3.5.4.10" evidence="1"/>
<dbReference type="EMBL" id="CP000958">
    <property type="protein sequence ID" value="ACA89836.1"/>
    <property type="molecule type" value="Genomic_DNA"/>
</dbReference>
<dbReference type="RefSeq" id="WP_012327908.1">
    <property type="nucleotide sequence ID" value="NC_010508.1"/>
</dbReference>
<dbReference type="SMR" id="B1JVV6"/>
<dbReference type="GeneID" id="83047458"/>
<dbReference type="KEGG" id="bcm:Bcenmc03_0658"/>
<dbReference type="HOGENOM" id="CLU_016316_5_2_4"/>
<dbReference type="UniPathway" id="UPA00074">
    <property type="reaction ID" value="UER00133"/>
</dbReference>
<dbReference type="UniPathway" id="UPA00074">
    <property type="reaction ID" value="UER00135"/>
</dbReference>
<dbReference type="Proteomes" id="UP000002169">
    <property type="component" value="Chromosome 1"/>
</dbReference>
<dbReference type="GO" id="GO:0005829">
    <property type="term" value="C:cytosol"/>
    <property type="evidence" value="ECO:0007669"/>
    <property type="project" value="TreeGrafter"/>
</dbReference>
<dbReference type="GO" id="GO:0003937">
    <property type="term" value="F:IMP cyclohydrolase activity"/>
    <property type="evidence" value="ECO:0007669"/>
    <property type="project" value="UniProtKB-UniRule"/>
</dbReference>
<dbReference type="GO" id="GO:0004643">
    <property type="term" value="F:phosphoribosylaminoimidazolecarboxamide formyltransferase activity"/>
    <property type="evidence" value="ECO:0007669"/>
    <property type="project" value="UniProtKB-UniRule"/>
</dbReference>
<dbReference type="GO" id="GO:0006189">
    <property type="term" value="P:'de novo' IMP biosynthetic process"/>
    <property type="evidence" value="ECO:0007669"/>
    <property type="project" value="UniProtKB-UniRule"/>
</dbReference>
<dbReference type="CDD" id="cd01421">
    <property type="entry name" value="IMPCH"/>
    <property type="match status" value="1"/>
</dbReference>
<dbReference type="FunFam" id="3.40.140.20:FF:000001">
    <property type="entry name" value="Bifunctional purine biosynthesis protein PurH"/>
    <property type="match status" value="1"/>
</dbReference>
<dbReference type="FunFam" id="3.40.140.20:FF:000002">
    <property type="entry name" value="Bifunctional purine biosynthesis protein PurH"/>
    <property type="match status" value="1"/>
</dbReference>
<dbReference type="FunFam" id="3.40.50.1380:FF:000001">
    <property type="entry name" value="Bifunctional purine biosynthesis protein PurH"/>
    <property type="match status" value="1"/>
</dbReference>
<dbReference type="Gene3D" id="3.40.140.20">
    <property type="match status" value="2"/>
</dbReference>
<dbReference type="Gene3D" id="3.40.50.1380">
    <property type="entry name" value="Methylglyoxal synthase-like domain"/>
    <property type="match status" value="1"/>
</dbReference>
<dbReference type="HAMAP" id="MF_00139">
    <property type="entry name" value="PurH"/>
    <property type="match status" value="1"/>
</dbReference>
<dbReference type="InterPro" id="IPR024051">
    <property type="entry name" value="AICAR_Tfase_dup_dom_sf"/>
</dbReference>
<dbReference type="InterPro" id="IPR016193">
    <property type="entry name" value="Cytidine_deaminase-like"/>
</dbReference>
<dbReference type="InterPro" id="IPR011607">
    <property type="entry name" value="MGS-like_dom"/>
</dbReference>
<dbReference type="InterPro" id="IPR036914">
    <property type="entry name" value="MGS-like_dom_sf"/>
</dbReference>
<dbReference type="InterPro" id="IPR002695">
    <property type="entry name" value="PurH-like"/>
</dbReference>
<dbReference type="NCBIfam" id="NF002049">
    <property type="entry name" value="PRK00881.1"/>
    <property type="match status" value="1"/>
</dbReference>
<dbReference type="NCBIfam" id="TIGR00355">
    <property type="entry name" value="purH"/>
    <property type="match status" value="1"/>
</dbReference>
<dbReference type="PANTHER" id="PTHR11692:SF0">
    <property type="entry name" value="BIFUNCTIONAL PURINE BIOSYNTHESIS PROTEIN ATIC"/>
    <property type="match status" value="1"/>
</dbReference>
<dbReference type="PANTHER" id="PTHR11692">
    <property type="entry name" value="BIFUNCTIONAL PURINE BIOSYNTHESIS PROTEIN PURH"/>
    <property type="match status" value="1"/>
</dbReference>
<dbReference type="Pfam" id="PF01808">
    <property type="entry name" value="AICARFT_IMPCHas"/>
    <property type="match status" value="1"/>
</dbReference>
<dbReference type="Pfam" id="PF02142">
    <property type="entry name" value="MGS"/>
    <property type="match status" value="1"/>
</dbReference>
<dbReference type="PIRSF" id="PIRSF000414">
    <property type="entry name" value="AICARFT_IMPCHas"/>
    <property type="match status" value="1"/>
</dbReference>
<dbReference type="SMART" id="SM00798">
    <property type="entry name" value="AICARFT_IMPCHas"/>
    <property type="match status" value="1"/>
</dbReference>
<dbReference type="SMART" id="SM00851">
    <property type="entry name" value="MGS"/>
    <property type="match status" value="1"/>
</dbReference>
<dbReference type="SUPFAM" id="SSF53927">
    <property type="entry name" value="Cytidine deaminase-like"/>
    <property type="match status" value="1"/>
</dbReference>
<dbReference type="SUPFAM" id="SSF52335">
    <property type="entry name" value="Methylglyoxal synthase-like"/>
    <property type="match status" value="1"/>
</dbReference>
<dbReference type="PROSITE" id="PS51855">
    <property type="entry name" value="MGS"/>
    <property type="match status" value="1"/>
</dbReference>
<accession>B1JVV6</accession>